<feature type="signal peptide" evidence="1">
    <location>
        <begin position="1"/>
        <end position="22"/>
    </location>
</feature>
<feature type="chain" id="PRO_1000137380" description="Foldase protein PrsA">
    <location>
        <begin position="23"/>
        <end position="336"/>
    </location>
</feature>
<feature type="domain" description="PpiC" evidence="1">
    <location>
        <begin position="194"/>
        <end position="286"/>
    </location>
</feature>
<feature type="lipid moiety-binding region" description="N-palmitoyl cysteine" evidence="1">
    <location>
        <position position="23"/>
    </location>
</feature>
<feature type="lipid moiety-binding region" description="S-diacylglycerol cysteine" evidence="1">
    <location>
        <position position="23"/>
    </location>
</feature>
<proteinExistence type="inferred from homology"/>
<accession>A5I7R3</accession>
<accession>A7G8Z5</accession>
<comment type="function">
    <text evidence="1">Plays a major role in protein secretion by helping the post-translocational extracellular folding of several secreted proteins.</text>
</comment>
<comment type="catalytic activity">
    <reaction evidence="1">
        <text>[protein]-peptidylproline (omega=180) = [protein]-peptidylproline (omega=0)</text>
        <dbReference type="Rhea" id="RHEA:16237"/>
        <dbReference type="Rhea" id="RHEA-COMP:10747"/>
        <dbReference type="Rhea" id="RHEA-COMP:10748"/>
        <dbReference type="ChEBI" id="CHEBI:83833"/>
        <dbReference type="ChEBI" id="CHEBI:83834"/>
        <dbReference type="EC" id="5.2.1.8"/>
    </reaction>
</comment>
<comment type="subcellular location">
    <subcellularLocation>
        <location evidence="1">Cell membrane</location>
        <topology evidence="1">Lipid-anchor</topology>
    </subcellularLocation>
</comment>
<comment type="similarity">
    <text evidence="1">Belongs to the PrsA family.</text>
</comment>
<evidence type="ECO:0000255" key="1">
    <source>
        <dbReference type="HAMAP-Rule" id="MF_01145"/>
    </source>
</evidence>
<gene>
    <name evidence="1" type="primary">prsA</name>
    <name type="ordered locus">CBO3538</name>
    <name type="ordered locus">CLC_3516</name>
</gene>
<keyword id="KW-1003">Cell membrane</keyword>
<keyword id="KW-0413">Isomerase</keyword>
<keyword id="KW-0449">Lipoprotein</keyword>
<keyword id="KW-0472">Membrane</keyword>
<keyword id="KW-0564">Palmitate</keyword>
<keyword id="KW-1185">Reference proteome</keyword>
<keyword id="KW-0697">Rotamase</keyword>
<keyword id="KW-0732">Signal</keyword>
<reference key="1">
    <citation type="journal article" date="2007" name="Genome Res.">
        <title>Genome sequence of a proteolytic (Group I) Clostridium botulinum strain Hall A and comparative analysis of the clostridial genomes.</title>
        <authorList>
            <person name="Sebaihia M."/>
            <person name="Peck M.W."/>
            <person name="Minton N.P."/>
            <person name="Thomson N.R."/>
            <person name="Holden M.T.G."/>
            <person name="Mitchell W.J."/>
            <person name="Carter A.T."/>
            <person name="Bentley S.D."/>
            <person name="Mason D.R."/>
            <person name="Crossman L."/>
            <person name="Paul C.J."/>
            <person name="Ivens A."/>
            <person name="Wells-Bennik M.H.J."/>
            <person name="Davis I.J."/>
            <person name="Cerdeno-Tarraga A.M."/>
            <person name="Churcher C."/>
            <person name="Quail M.A."/>
            <person name="Chillingworth T."/>
            <person name="Feltwell T."/>
            <person name="Fraser A."/>
            <person name="Goodhead I."/>
            <person name="Hance Z."/>
            <person name="Jagels K."/>
            <person name="Larke N."/>
            <person name="Maddison M."/>
            <person name="Moule S."/>
            <person name="Mungall K."/>
            <person name="Norbertczak H."/>
            <person name="Rabbinowitsch E."/>
            <person name="Sanders M."/>
            <person name="Simmonds M."/>
            <person name="White B."/>
            <person name="Whithead S."/>
            <person name="Parkhill J."/>
        </authorList>
    </citation>
    <scope>NUCLEOTIDE SEQUENCE [LARGE SCALE GENOMIC DNA]</scope>
    <source>
        <strain>Hall / ATCC 3502 / NCTC 13319 / Type A</strain>
    </source>
</reference>
<reference key="2">
    <citation type="journal article" date="2007" name="PLoS ONE">
        <title>Analysis of the neurotoxin complex genes in Clostridium botulinum A1-A4 and B1 strains: BoNT/A3, /Ba4 and /B1 clusters are located within plasmids.</title>
        <authorList>
            <person name="Smith T.J."/>
            <person name="Hill K.K."/>
            <person name="Foley B.T."/>
            <person name="Detter J.C."/>
            <person name="Munk A.C."/>
            <person name="Bruce D.C."/>
            <person name="Doggett N.A."/>
            <person name="Smith L.A."/>
            <person name="Marks J.D."/>
            <person name="Xie G."/>
            <person name="Brettin T.S."/>
        </authorList>
    </citation>
    <scope>NUCLEOTIDE SEQUENCE [LARGE SCALE GENOMIC DNA]</scope>
    <source>
        <strain>Hall / ATCC 3502 / NCTC 13319 / Type A</strain>
    </source>
</reference>
<dbReference type="EC" id="5.2.1.8" evidence="1"/>
<dbReference type="EMBL" id="CP000727">
    <property type="protein sequence ID" value="ABS37373.1"/>
    <property type="molecule type" value="Genomic_DNA"/>
</dbReference>
<dbReference type="EMBL" id="AM412317">
    <property type="protein sequence ID" value="CAL85098.1"/>
    <property type="molecule type" value="Genomic_DNA"/>
</dbReference>
<dbReference type="RefSeq" id="WP_012048382.1">
    <property type="nucleotide sequence ID" value="NC_009698.1"/>
</dbReference>
<dbReference type="RefSeq" id="YP_001256019.1">
    <property type="nucleotide sequence ID" value="NC_009495.1"/>
</dbReference>
<dbReference type="RefSeq" id="YP_001389260.1">
    <property type="nucleotide sequence ID" value="NC_009698.1"/>
</dbReference>
<dbReference type="SMR" id="A5I7R3"/>
<dbReference type="GeneID" id="5187792"/>
<dbReference type="KEGG" id="cbh:CLC_3516"/>
<dbReference type="KEGG" id="cbo:CBO3538"/>
<dbReference type="PATRIC" id="fig|413999.7.peg.3515"/>
<dbReference type="HOGENOM" id="CLU_034646_5_2_9"/>
<dbReference type="PRO" id="PR:A5I7R3"/>
<dbReference type="Proteomes" id="UP000001986">
    <property type="component" value="Chromosome"/>
</dbReference>
<dbReference type="GO" id="GO:0005886">
    <property type="term" value="C:plasma membrane"/>
    <property type="evidence" value="ECO:0007669"/>
    <property type="project" value="UniProtKB-SubCell"/>
</dbReference>
<dbReference type="GO" id="GO:0003755">
    <property type="term" value="F:peptidyl-prolyl cis-trans isomerase activity"/>
    <property type="evidence" value="ECO:0007669"/>
    <property type="project" value="UniProtKB-UniRule"/>
</dbReference>
<dbReference type="GO" id="GO:0006457">
    <property type="term" value="P:protein folding"/>
    <property type="evidence" value="ECO:0007669"/>
    <property type="project" value="UniProtKB-UniRule"/>
</dbReference>
<dbReference type="Gene3D" id="3.10.50.40">
    <property type="match status" value="1"/>
</dbReference>
<dbReference type="Gene3D" id="1.10.4030.10">
    <property type="entry name" value="Porin chaperone SurA, peptide-binding domain"/>
    <property type="match status" value="1"/>
</dbReference>
<dbReference type="HAMAP" id="MF_01145">
    <property type="entry name" value="Foldase_PrsA"/>
    <property type="match status" value="1"/>
</dbReference>
<dbReference type="InterPro" id="IPR023059">
    <property type="entry name" value="Foldase_PrsA"/>
</dbReference>
<dbReference type="InterPro" id="IPR046357">
    <property type="entry name" value="PPIase_dom_sf"/>
</dbReference>
<dbReference type="InterPro" id="IPR000297">
    <property type="entry name" value="PPIase_PpiC"/>
</dbReference>
<dbReference type="InterPro" id="IPR023058">
    <property type="entry name" value="PPIase_PpiC_CS"/>
</dbReference>
<dbReference type="InterPro" id="IPR050245">
    <property type="entry name" value="PrsA_foldase"/>
</dbReference>
<dbReference type="InterPro" id="IPR027304">
    <property type="entry name" value="Trigger_fact/SurA_dom_sf"/>
</dbReference>
<dbReference type="NCBIfam" id="NF000809">
    <property type="entry name" value="PRK00059.1"/>
    <property type="match status" value="1"/>
</dbReference>
<dbReference type="PANTHER" id="PTHR47245:SF1">
    <property type="entry name" value="FOLDASE PROTEIN PRSA"/>
    <property type="match status" value="1"/>
</dbReference>
<dbReference type="PANTHER" id="PTHR47245">
    <property type="entry name" value="PEPTIDYLPROLYL ISOMERASE"/>
    <property type="match status" value="1"/>
</dbReference>
<dbReference type="Pfam" id="PF13145">
    <property type="entry name" value="Rotamase_2"/>
    <property type="match status" value="1"/>
</dbReference>
<dbReference type="Pfam" id="PF13624">
    <property type="entry name" value="SurA_N_3"/>
    <property type="match status" value="1"/>
</dbReference>
<dbReference type="SUPFAM" id="SSF54534">
    <property type="entry name" value="FKBP-like"/>
    <property type="match status" value="1"/>
</dbReference>
<dbReference type="SUPFAM" id="SSF109998">
    <property type="entry name" value="Triger factor/SurA peptide-binding domain-like"/>
    <property type="match status" value="1"/>
</dbReference>
<dbReference type="PROSITE" id="PS01096">
    <property type="entry name" value="PPIC_PPIASE_1"/>
    <property type="match status" value="1"/>
</dbReference>
<dbReference type="PROSITE" id="PS50198">
    <property type="entry name" value="PPIC_PPIASE_2"/>
    <property type="match status" value="1"/>
</dbReference>
<dbReference type="PROSITE" id="PS51257">
    <property type="entry name" value="PROKAR_LIPOPROTEIN"/>
    <property type="match status" value="1"/>
</dbReference>
<name>PRSA_CLOBH</name>
<protein>
    <recommendedName>
        <fullName evidence="1">Foldase protein PrsA</fullName>
        <ecNumber evidence="1">5.2.1.8</ecNumber>
    </recommendedName>
</protein>
<sequence length="336" mass="38672">MKSAKKLLSVLCLGIFILTFTACDMVEKTPEAKAKSTIAKVNGEKIQRKDLDESPSMQQVLSQIKTQYGEEFEKSEQGKEVIKEQKKQILENLITEKVLLQKGKELKVIPKDEELNKEADKKVNEIKAVYNNDEKKFEETLKSTGFTKETLKEYLRDQIVIEKVINEVTKDVKVEDKDAQKYYNENQSMFTEKPNTMNVSHILVKTEDEAKKVKKRLDAKEDFAKVAKEVSQDPGSKDKGGLLGDISYSDSNYDPTFMKAAIALKEGTISNPVHTQWGYHIIKVNSKKEYPVKKFDSVKEDIKKQLKQEKQQEAYTKKIEEWKKASKIKTYEKNLL</sequence>
<organism>
    <name type="scientific">Clostridium botulinum (strain Hall / ATCC 3502 / NCTC 13319 / Type A)</name>
    <dbReference type="NCBI Taxonomy" id="441771"/>
    <lineage>
        <taxon>Bacteria</taxon>
        <taxon>Bacillati</taxon>
        <taxon>Bacillota</taxon>
        <taxon>Clostridia</taxon>
        <taxon>Eubacteriales</taxon>
        <taxon>Clostridiaceae</taxon>
        <taxon>Clostridium</taxon>
    </lineage>
</organism>